<reference key="1">
    <citation type="journal article" date="2001" name="Nature">
        <title>Complete genome sequence of Salmonella enterica serovar Typhimurium LT2.</title>
        <authorList>
            <person name="McClelland M."/>
            <person name="Sanderson K.E."/>
            <person name="Spieth J."/>
            <person name="Clifton S.W."/>
            <person name="Latreille P."/>
            <person name="Courtney L."/>
            <person name="Porwollik S."/>
            <person name="Ali J."/>
            <person name="Dante M."/>
            <person name="Du F."/>
            <person name="Hou S."/>
            <person name="Layman D."/>
            <person name="Leonard S."/>
            <person name="Nguyen C."/>
            <person name="Scott K."/>
            <person name="Holmes A."/>
            <person name="Grewal N."/>
            <person name="Mulvaney E."/>
            <person name="Ryan E."/>
            <person name="Sun H."/>
            <person name="Florea L."/>
            <person name="Miller W."/>
            <person name="Stoneking T."/>
            <person name="Nhan M."/>
            <person name="Waterston R."/>
            <person name="Wilson R.K."/>
        </authorList>
    </citation>
    <scope>NUCLEOTIDE SEQUENCE [LARGE SCALE GENOMIC DNA]</scope>
    <source>
        <strain>LT2 / SGSC1412 / ATCC 700720</strain>
    </source>
</reference>
<feature type="chain" id="PRO_0000108699" description="Ribosomal RNA small subunit methyltransferase H">
    <location>
        <begin position="1"/>
        <end position="313"/>
    </location>
</feature>
<feature type="binding site" evidence="1">
    <location>
        <begin position="35"/>
        <end position="37"/>
    </location>
    <ligand>
        <name>S-adenosyl-L-methionine</name>
        <dbReference type="ChEBI" id="CHEBI:59789"/>
    </ligand>
</feature>
<feature type="binding site" evidence="1">
    <location>
        <position position="55"/>
    </location>
    <ligand>
        <name>S-adenosyl-L-methionine</name>
        <dbReference type="ChEBI" id="CHEBI:59789"/>
    </ligand>
</feature>
<feature type="binding site" evidence="1">
    <location>
        <position position="79"/>
    </location>
    <ligand>
        <name>S-adenosyl-L-methionine</name>
        <dbReference type="ChEBI" id="CHEBI:59789"/>
    </ligand>
</feature>
<feature type="binding site" evidence="1">
    <location>
        <position position="101"/>
    </location>
    <ligand>
        <name>S-adenosyl-L-methionine</name>
        <dbReference type="ChEBI" id="CHEBI:59789"/>
    </ligand>
</feature>
<feature type="binding site" evidence="1">
    <location>
        <position position="108"/>
    </location>
    <ligand>
        <name>S-adenosyl-L-methionine</name>
        <dbReference type="ChEBI" id="CHEBI:59789"/>
    </ligand>
</feature>
<dbReference type="EC" id="2.1.1.199" evidence="1"/>
<dbReference type="EMBL" id="AE006468">
    <property type="protein sequence ID" value="AAL19084.1"/>
    <property type="molecule type" value="Genomic_DNA"/>
</dbReference>
<dbReference type="RefSeq" id="WP_000970444.1">
    <property type="nucleotide sequence ID" value="NC_003197.2"/>
</dbReference>
<dbReference type="SMR" id="Q8ZRU8"/>
<dbReference type="STRING" id="99287.STM0120"/>
<dbReference type="PaxDb" id="99287-STM0120"/>
<dbReference type="KEGG" id="stm:STM0120"/>
<dbReference type="PATRIC" id="fig|99287.12.peg.126"/>
<dbReference type="HOGENOM" id="CLU_038422_2_0_6"/>
<dbReference type="OMA" id="NPAKRTF"/>
<dbReference type="PhylomeDB" id="Q8ZRU8"/>
<dbReference type="BioCyc" id="SENT99287:STM0120-MONOMER"/>
<dbReference type="Proteomes" id="UP000001014">
    <property type="component" value="Chromosome"/>
</dbReference>
<dbReference type="GO" id="GO:0005737">
    <property type="term" value="C:cytoplasm"/>
    <property type="evidence" value="ECO:0000318"/>
    <property type="project" value="GO_Central"/>
</dbReference>
<dbReference type="GO" id="GO:0071424">
    <property type="term" value="F:rRNA (cytosine-N4-)-methyltransferase activity"/>
    <property type="evidence" value="ECO:0000318"/>
    <property type="project" value="GO_Central"/>
</dbReference>
<dbReference type="GO" id="GO:0070475">
    <property type="term" value="P:rRNA base methylation"/>
    <property type="evidence" value="ECO:0000318"/>
    <property type="project" value="GO_Central"/>
</dbReference>
<dbReference type="FunFam" id="1.10.150.170:FF:000001">
    <property type="entry name" value="Ribosomal RNA small subunit methyltransferase H"/>
    <property type="match status" value="1"/>
</dbReference>
<dbReference type="Gene3D" id="1.10.150.170">
    <property type="entry name" value="Putative methyltransferase TM0872, insert domain"/>
    <property type="match status" value="1"/>
</dbReference>
<dbReference type="Gene3D" id="3.40.50.150">
    <property type="entry name" value="Vaccinia Virus protein VP39"/>
    <property type="match status" value="1"/>
</dbReference>
<dbReference type="HAMAP" id="MF_01007">
    <property type="entry name" value="16SrRNA_methyltr_H"/>
    <property type="match status" value="1"/>
</dbReference>
<dbReference type="InterPro" id="IPR002903">
    <property type="entry name" value="RsmH"/>
</dbReference>
<dbReference type="InterPro" id="IPR023397">
    <property type="entry name" value="SAM-dep_MeTrfase_MraW_recog"/>
</dbReference>
<dbReference type="InterPro" id="IPR029063">
    <property type="entry name" value="SAM-dependent_MTases_sf"/>
</dbReference>
<dbReference type="NCBIfam" id="TIGR00006">
    <property type="entry name" value="16S rRNA (cytosine(1402)-N(4))-methyltransferase RsmH"/>
    <property type="match status" value="1"/>
</dbReference>
<dbReference type="PANTHER" id="PTHR11265:SF0">
    <property type="entry name" value="12S RRNA N4-METHYLCYTIDINE METHYLTRANSFERASE"/>
    <property type="match status" value="1"/>
</dbReference>
<dbReference type="PANTHER" id="PTHR11265">
    <property type="entry name" value="S-ADENOSYL-METHYLTRANSFERASE MRAW"/>
    <property type="match status" value="1"/>
</dbReference>
<dbReference type="Pfam" id="PF01795">
    <property type="entry name" value="Methyltransf_5"/>
    <property type="match status" value="1"/>
</dbReference>
<dbReference type="PIRSF" id="PIRSF004486">
    <property type="entry name" value="MraW"/>
    <property type="match status" value="1"/>
</dbReference>
<dbReference type="SUPFAM" id="SSF81799">
    <property type="entry name" value="Putative methyltransferase TM0872, insert domain"/>
    <property type="match status" value="1"/>
</dbReference>
<dbReference type="SUPFAM" id="SSF53335">
    <property type="entry name" value="S-adenosyl-L-methionine-dependent methyltransferases"/>
    <property type="match status" value="1"/>
</dbReference>
<keyword id="KW-0963">Cytoplasm</keyword>
<keyword id="KW-0489">Methyltransferase</keyword>
<keyword id="KW-1185">Reference proteome</keyword>
<keyword id="KW-0698">rRNA processing</keyword>
<keyword id="KW-0949">S-adenosyl-L-methionine</keyword>
<keyword id="KW-0808">Transferase</keyword>
<proteinExistence type="inferred from homology"/>
<accession>Q8ZRU8</accession>
<gene>
    <name evidence="1" type="primary">rsmH</name>
    <name type="synonym">mraW</name>
    <name type="ordered locus">STM0120</name>
</gene>
<protein>
    <recommendedName>
        <fullName evidence="1">Ribosomal RNA small subunit methyltransferase H</fullName>
        <ecNumber evidence="1">2.1.1.199</ecNumber>
    </recommendedName>
    <alternativeName>
        <fullName evidence="1">16S rRNA m(4)C1402 methyltransferase</fullName>
    </alternativeName>
    <alternativeName>
        <fullName evidence="1">rRNA (cytosine-N(4)-)-methyltransferase RsmH</fullName>
    </alternativeName>
</protein>
<organism>
    <name type="scientific">Salmonella typhimurium (strain LT2 / SGSC1412 / ATCC 700720)</name>
    <dbReference type="NCBI Taxonomy" id="99287"/>
    <lineage>
        <taxon>Bacteria</taxon>
        <taxon>Pseudomonadati</taxon>
        <taxon>Pseudomonadota</taxon>
        <taxon>Gammaproteobacteria</taxon>
        <taxon>Enterobacterales</taxon>
        <taxon>Enterobacteriaceae</taxon>
        <taxon>Salmonella</taxon>
    </lineage>
</organism>
<evidence type="ECO:0000255" key="1">
    <source>
        <dbReference type="HAMAP-Rule" id="MF_01007"/>
    </source>
</evidence>
<sequence>MMENFKHTTVLLDEAVNGLNIRPDGIYIDGTFGRGGHSRLILSQLGEEGRLLAIDRDPQAIAVAQTINDPRFSIIHGPFSALADYVAERELTGKIDGILLDLGVSSPQLDDAERGFSFMRDGPLDMRMDPTRGQSAAEWLQTAEEADIAWVLKTFGEERFAKRIARAIVERNREQPMTRTKELAEVVAAATPVKDKFKHPATRTFQAVRIWVNSELEEIEQALKSSLSVLAPGGRLSIISFHSLEDRIVKRFMREQSRGPQVPAGLPMTEAQLKKLGGRELRALGKLMPGEKEVAENPRARSSVLRIAERTNA</sequence>
<comment type="function">
    <text evidence="1">Specifically methylates the N4 position of cytidine in position 1402 (C1402) of 16S rRNA.</text>
</comment>
<comment type="catalytic activity">
    <reaction evidence="1">
        <text>cytidine(1402) in 16S rRNA + S-adenosyl-L-methionine = N(4)-methylcytidine(1402) in 16S rRNA + S-adenosyl-L-homocysteine + H(+)</text>
        <dbReference type="Rhea" id="RHEA:42928"/>
        <dbReference type="Rhea" id="RHEA-COMP:10286"/>
        <dbReference type="Rhea" id="RHEA-COMP:10287"/>
        <dbReference type="ChEBI" id="CHEBI:15378"/>
        <dbReference type="ChEBI" id="CHEBI:57856"/>
        <dbReference type="ChEBI" id="CHEBI:59789"/>
        <dbReference type="ChEBI" id="CHEBI:74506"/>
        <dbReference type="ChEBI" id="CHEBI:82748"/>
        <dbReference type="EC" id="2.1.1.199"/>
    </reaction>
</comment>
<comment type="subcellular location">
    <subcellularLocation>
        <location evidence="1">Cytoplasm</location>
    </subcellularLocation>
</comment>
<comment type="similarity">
    <text evidence="1">Belongs to the methyltransferase superfamily. RsmH family.</text>
</comment>
<name>RSMH_SALTY</name>